<reference key="1">
    <citation type="journal article" date="2003" name="Genome Res.">
        <title>Tropheryma whipplei twist: a human pathogenic Actinobacteria with a reduced genome.</title>
        <authorList>
            <person name="Raoult D."/>
            <person name="Ogata H."/>
            <person name="Audic S."/>
            <person name="Robert C."/>
            <person name="Suhre K."/>
            <person name="Drancourt M."/>
            <person name="Claverie J.-M."/>
        </authorList>
    </citation>
    <scope>NUCLEOTIDE SEQUENCE [LARGE SCALE GENOMIC DNA]</scope>
    <source>
        <strain>Twist</strain>
    </source>
</reference>
<keyword id="KW-0456">Lyase</keyword>
<keyword id="KW-0663">Pyridoxal phosphate</keyword>
<keyword id="KW-1185">Reference proteome</keyword>
<keyword id="KW-0704">Schiff base</keyword>
<proteinExistence type="inferred from homology"/>
<gene>
    <name evidence="1" type="primary">pdxS</name>
    <name type="ordered locus">TWT_264</name>
</gene>
<feature type="chain" id="PRO_0000109429" description="Pyridoxal 5'-phosphate synthase subunit PdxS">
    <location>
        <begin position="1"/>
        <end position="287"/>
    </location>
</feature>
<feature type="active site" description="Schiff-base intermediate with D-ribose 5-phosphate" evidence="1">
    <location>
        <position position="78"/>
    </location>
</feature>
<feature type="binding site" evidence="1">
    <location>
        <position position="21"/>
    </location>
    <ligand>
        <name>D-ribose 5-phosphate</name>
        <dbReference type="ChEBI" id="CHEBI:78346"/>
    </ligand>
</feature>
<feature type="binding site" evidence="1">
    <location>
        <position position="150"/>
    </location>
    <ligand>
        <name>D-ribose 5-phosphate</name>
        <dbReference type="ChEBI" id="CHEBI:78346"/>
    </ligand>
</feature>
<feature type="binding site" evidence="1">
    <location>
        <position position="162"/>
    </location>
    <ligand>
        <name>D-glyceraldehyde 3-phosphate</name>
        <dbReference type="ChEBI" id="CHEBI:59776"/>
    </ligand>
</feature>
<feature type="binding site" evidence="1">
    <location>
        <position position="211"/>
    </location>
    <ligand>
        <name>D-ribose 5-phosphate</name>
        <dbReference type="ChEBI" id="CHEBI:78346"/>
    </ligand>
</feature>
<feature type="binding site" evidence="1">
    <location>
        <begin position="232"/>
        <end position="233"/>
    </location>
    <ligand>
        <name>D-ribose 5-phosphate</name>
        <dbReference type="ChEBI" id="CHEBI:78346"/>
    </ligand>
</feature>
<comment type="function">
    <text evidence="1">Catalyzes the formation of pyridoxal 5'-phosphate from ribose 5-phosphate (RBP), glyceraldehyde 3-phosphate (G3P) and ammonia. The ammonia is provided by the PdxT subunit. Can also use ribulose 5-phosphate and dihydroxyacetone phosphate as substrates, resulting from enzyme-catalyzed isomerization of RBP and G3P, respectively.</text>
</comment>
<comment type="catalytic activity">
    <reaction evidence="1">
        <text>aldehydo-D-ribose 5-phosphate + D-glyceraldehyde 3-phosphate + L-glutamine = pyridoxal 5'-phosphate + L-glutamate + phosphate + 3 H2O + H(+)</text>
        <dbReference type="Rhea" id="RHEA:31507"/>
        <dbReference type="ChEBI" id="CHEBI:15377"/>
        <dbReference type="ChEBI" id="CHEBI:15378"/>
        <dbReference type="ChEBI" id="CHEBI:29985"/>
        <dbReference type="ChEBI" id="CHEBI:43474"/>
        <dbReference type="ChEBI" id="CHEBI:58273"/>
        <dbReference type="ChEBI" id="CHEBI:58359"/>
        <dbReference type="ChEBI" id="CHEBI:59776"/>
        <dbReference type="ChEBI" id="CHEBI:597326"/>
        <dbReference type="EC" id="4.3.3.6"/>
    </reaction>
</comment>
<comment type="pathway">
    <text evidence="1">Cofactor biosynthesis; pyridoxal 5'-phosphate biosynthesis.</text>
</comment>
<comment type="subunit">
    <text evidence="1">In the presence of PdxT, forms a dodecamer of heterodimers.</text>
</comment>
<comment type="similarity">
    <text evidence="1">Belongs to the PdxS/SNZ family.</text>
</comment>
<name>PDXS_TROWT</name>
<sequence length="287" mass="30289">MGLDNLKVGLAQMLKGGVIMDVVTPDQAKIAEDAGAVAVMALEKIPSDIRASGGVSRMSDPGLIERVMDSVSIPVMAKVRIGHFAEAQILQSLKVDYIDESEVLSVADSSYHIDKRKFTVPFVCGATNLGEALRRISEGASMIRSKGEAGTGDIAQATKHIRAILSEISALTQAREDELPARARKLGAPIDLVRETARLGRLPVVLFTAGGIATPADSSLVMQLGSDGVFVGSGIFKSEDPKAYAAAIVQATAQYDDADLLARVSRNLGQAMPGVSNLDVRFSNRGV</sequence>
<dbReference type="EC" id="4.3.3.6" evidence="1"/>
<dbReference type="EMBL" id="AE014184">
    <property type="protein sequence ID" value="AAO44361.1"/>
    <property type="molecule type" value="Genomic_DNA"/>
</dbReference>
<dbReference type="RefSeq" id="WP_011102464.1">
    <property type="nucleotide sequence ID" value="NC_004572.3"/>
</dbReference>
<dbReference type="SMR" id="Q83MZ9"/>
<dbReference type="STRING" id="203267.TWT_264"/>
<dbReference type="KEGG" id="twh:TWT_264"/>
<dbReference type="eggNOG" id="COG0214">
    <property type="taxonomic scope" value="Bacteria"/>
</dbReference>
<dbReference type="HOGENOM" id="CLU_055352_1_0_11"/>
<dbReference type="OrthoDB" id="9772545at2"/>
<dbReference type="UniPathway" id="UPA00245"/>
<dbReference type="Proteomes" id="UP000002200">
    <property type="component" value="Chromosome"/>
</dbReference>
<dbReference type="GO" id="GO:0036381">
    <property type="term" value="F:pyridoxal 5'-phosphate synthase (glutamine hydrolysing) activity"/>
    <property type="evidence" value="ECO:0007669"/>
    <property type="project" value="UniProtKB-UniRule"/>
</dbReference>
<dbReference type="GO" id="GO:0006520">
    <property type="term" value="P:amino acid metabolic process"/>
    <property type="evidence" value="ECO:0007669"/>
    <property type="project" value="TreeGrafter"/>
</dbReference>
<dbReference type="GO" id="GO:0042823">
    <property type="term" value="P:pyridoxal phosphate biosynthetic process"/>
    <property type="evidence" value="ECO:0007669"/>
    <property type="project" value="UniProtKB-UniRule"/>
</dbReference>
<dbReference type="GO" id="GO:0008615">
    <property type="term" value="P:pyridoxine biosynthetic process"/>
    <property type="evidence" value="ECO:0007669"/>
    <property type="project" value="TreeGrafter"/>
</dbReference>
<dbReference type="CDD" id="cd04727">
    <property type="entry name" value="pdxS"/>
    <property type="match status" value="1"/>
</dbReference>
<dbReference type="FunFam" id="3.20.20.70:FF:000001">
    <property type="entry name" value="Pyridoxine biosynthesis protein PDX1"/>
    <property type="match status" value="1"/>
</dbReference>
<dbReference type="Gene3D" id="3.20.20.70">
    <property type="entry name" value="Aldolase class I"/>
    <property type="match status" value="1"/>
</dbReference>
<dbReference type="HAMAP" id="MF_01824">
    <property type="entry name" value="PdxS"/>
    <property type="match status" value="1"/>
</dbReference>
<dbReference type="InterPro" id="IPR013785">
    <property type="entry name" value="Aldolase_TIM"/>
</dbReference>
<dbReference type="InterPro" id="IPR001852">
    <property type="entry name" value="PdxS/SNZ"/>
</dbReference>
<dbReference type="InterPro" id="IPR033755">
    <property type="entry name" value="PdxS/SNZ_N"/>
</dbReference>
<dbReference type="InterPro" id="IPR011060">
    <property type="entry name" value="RibuloseP-bd_barrel"/>
</dbReference>
<dbReference type="NCBIfam" id="NF003215">
    <property type="entry name" value="PRK04180.1"/>
    <property type="match status" value="1"/>
</dbReference>
<dbReference type="NCBIfam" id="TIGR00343">
    <property type="entry name" value="pyridoxal 5'-phosphate synthase lyase subunit PdxS"/>
    <property type="match status" value="1"/>
</dbReference>
<dbReference type="PANTHER" id="PTHR31829">
    <property type="entry name" value="PYRIDOXAL 5'-PHOSPHATE SYNTHASE SUBUNIT SNZ1-RELATED"/>
    <property type="match status" value="1"/>
</dbReference>
<dbReference type="PANTHER" id="PTHR31829:SF0">
    <property type="entry name" value="PYRIDOXAL 5'-PHOSPHATE SYNTHASE SUBUNIT SNZ1-RELATED"/>
    <property type="match status" value="1"/>
</dbReference>
<dbReference type="Pfam" id="PF01680">
    <property type="entry name" value="SOR_SNZ"/>
    <property type="match status" value="1"/>
</dbReference>
<dbReference type="PIRSF" id="PIRSF029271">
    <property type="entry name" value="Pdx1"/>
    <property type="match status" value="1"/>
</dbReference>
<dbReference type="SUPFAM" id="SSF51366">
    <property type="entry name" value="Ribulose-phoshate binding barrel"/>
    <property type="match status" value="1"/>
</dbReference>
<dbReference type="PROSITE" id="PS01235">
    <property type="entry name" value="PDXS_SNZ_1"/>
    <property type="match status" value="1"/>
</dbReference>
<dbReference type="PROSITE" id="PS51129">
    <property type="entry name" value="PDXS_SNZ_2"/>
    <property type="match status" value="1"/>
</dbReference>
<accession>Q83MZ9</accession>
<protein>
    <recommendedName>
        <fullName evidence="1">Pyridoxal 5'-phosphate synthase subunit PdxS</fullName>
        <shortName evidence="1">PLP synthase subunit PdxS</shortName>
        <ecNumber evidence="1">4.3.3.6</ecNumber>
    </recommendedName>
    <alternativeName>
        <fullName evidence="1">Pdx1</fullName>
    </alternativeName>
</protein>
<organism>
    <name type="scientific">Tropheryma whipplei (strain Twist)</name>
    <name type="common">Whipple's bacillus</name>
    <dbReference type="NCBI Taxonomy" id="203267"/>
    <lineage>
        <taxon>Bacteria</taxon>
        <taxon>Bacillati</taxon>
        <taxon>Actinomycetota</taxon>
        <taxon>Actinomycetes</taxon>
        <taxon>Micrococcales</taxon>
        <taxon>Tropherymataceae</taxon>
        <taxon>Tropheryma</taxon>
    </lineage>
</organism>
<evidence type="ECO:0000255" key="1">
    <source>
        <dbReference type="HAMAP-Rule" id="MF_01824"/>
    </source>
</evidence>